<gene>
    <name type="primary">CYP1A5</name>
</gene>
<protein>
    <recommendedName>
        <fullName>Cytochrome P450 1A5</fullName>
        <ecNumber>1.14.14.1</ecNumber>
    </recommendedName>
    <alternativeName>
        <fullName>CYPIA5</fullName>
    </alternativeName>
    <alternativeName>
        <fullName>Cytochrome P450 TCDDAA</fullName>
    </alternativeName>
</protein>
<feature type="chain" id="PRO_0000051659" description="Cytochrome P450 1A5">
    <location>
        <begin position="1"/>
        <end position="528"/>
    </location>
</feature>
<feature type="binding site" description="axial binding residue" evidence="1">
    <location>
        <position position="467"/>
    </location>
    <ligand>
        <name>heme</name>
        <dbReference type="ChEBI" id="CHEBI:30413"/>
    </ligand>
    <ligandPart>
        <name>Fe</name>
        <dbReference type="ChEBI" id="CHEBI:18248"/>
    </ligandPart>
</feature>
<evidence type="ECO:0000250" key="1"/>
<evidence type="ECO:0000305" key="2"/>
<reference key="1">
    <citation type="journal article" date="1996" name="J. Biol. Chem.">
        <title>Molecular cloning and expression of two novel avian cytochrome P450 1A enzymes induced by 2,3,7,8-tetrachlorodibenzo-p-dioxin.</title>
        <authorList>
            <person name="Gilday D.J."/>
            <person name="Gannon M."/>
            <person name="Yutzey K."/>
            <person name="Bader D."/>
            <person name="Rifkind A.B."/>
        </authorList>
    </citation>
    <scope>NUCLEOTIDE SEQUENCE [MRNA]</scope>
    <source>
        <tissue>Liver</tissue>
    </source>
</reference>
<name>CP1A5_CHICK</name>
<sequence>MGPEEVMVQASSPGLISATEVLVAAATFCLLLLLTQTRRQHAPKGLRSPPGPRGLPMLGSVLELRKDPHLVLTRLSRKYGDVMEVTIGSRPVVVLSGLETIKQALVRQAEDFMGRPDLYSFRHITDGQSLTFSTDTGEMWKARRKLAQNALKNFSIAASPTASSSCLLEEHVSTEASYLVTKFLQLMEEKQSFDPYRYMVVSVANVICAICFGKRYDHDDQELLSVVNVVDEFVDVTAAGNPADFIPLLRYLPSRNMDSFLDFNKRFMKLLQTAVEEHYQTFDKNNIRDVTDSLIEQCVEKKAEANGATQIPNEKIINLVNDIFGAGFDTVTTALSWSLMYLVTYPHMQKKIQAELDQTIGRERRPRLSDRGMLPYTEAFILEMFRHSSFMPFTIPHSTTRDTVLNGYYIPKDRCVFINQWQVNHDEKLWKDPQAFNPERFLNAEGTEVNKVDAEKVMTFGLGKRRCIGENIGKWEVFLFLSTLLQQLEFSIQDGKKADMTPIYGLSMKHKRCEHFQVKKRFSMKSSN</sequence>
<comment type="function">
    <text>Cytochromes P450 are a group of heme-thiolate monooxygenases. In liver microsomes, this enzyme is involved in an NADPH-dependent electron transport pathway. It oxidizes a variety of structurally unrelated compounds, including steroids, fatty acids, and xenobiotics.</text>
</comment>
<comment type="catalytic activity">
    <reaction>
        <text>an organic molecule + reduced [NADPH--hemoprotein reductase] + O2 = an alcohol + oxidized [NADPH--hemoprotein reductase] + H2O + H(+)</text>
        <dbReference type="Rhea" id="RHEA:17149"/>
        <dbReference type="Rhea" id="RHEA-COMP:11964"/>
        <dbReference type="Rhea" id="RHEA-COMP:11965"/>
        <dbReference type="ChEBI" id="CHEBI:15377"/>
        <dbReference type="ChEBI" id="CHEBI:15378"/>
        <dbReference type="ChEBI" id="CHEBI:15379"/>
        <dbReference type="ChEBI" id="CHEBI:30879"/>
        <dbReference type="ChEBI" id="CHEBI:57618"/>
        <dbReference type="ChEBI" id="CHEBI:58210"/>
        <dbReference type="ChEBI" id="CHEBI:142491"/>
        <dbReference type="EC" id="1.14.14.1"/>
    </reaction>
</comment>
<comment type="cofactor">
    <cofactor evidence="1">
        <name>heme</name>
        <dbReference type="ChEBI" id="CHEBI:30413"/>
    </cofactor>
</comment>
<comment type="subcellular location">
    <subcellularLocation>
        <location>Endoplasmic reticulum membrane</location>
        <topology>Peripheral membrane protein</topology>
    </subcellularLocation>
    <subcellularLocation>
        <location>Microsome membrane</location>
        <topology>Peripheral membrane protein</topology>
    </subcellularLocation>
</comment>
<comment type="induction">
    <text>By 2,3,7,8-tetrachlorodibenzo-p-dioxin (TCDD).</text>
</comment>
<comment type="similarity">
    <text evidence="2">Belongs to the cytochrome P450 family.</text>
</comment>
<organism>
    <name type="scientific">Gallus gallus</name>
    <name type="common">Chicken</name>
    <dbReference type="NCBI Taxonomy" id="9031"/>
    <lineage>
        <taxon>Eukaryota</taxon>
        <taxon>Metazoa</taxon>
        <taxon>Chordata</taxon>
        <taxon>Craniata</taxon>
        <taxon>Vertebrata</taxon>
        <taxon>Euteleostomi</taxon>
        <taxon>Archelosauria</taxon>
        <taxon>Archosauria</taxon>
        <taxon>Dinosauria</taxon>
        <taxon>Saurischia</taxon>
        <taxon>Theropoda</taxon>
        <taxon>Coelurosauria</taxon>
        <taxon>Aves</taxon>
        <taxon>Neognathae</taxon>
        <taxon>Galloanserae</taxon>
        <taxon>Galliformes</taxon>
        <taxon>Phasianidae</taxon>
        <taxon>Phasianinae</taxon>
        <taxon>Gallus</taxon>
    </lineage>
</organism>
<dbReference type="EC" id="1.14.14.1"/>
<dbReference type="EMBL" id="X99454">
    <property type="protein sequence ID" value="CAA67816.1"/>
    <property type="molecule type" value="mRNA"/>
</dbReference>
<dbReference type="RefSeq" id="NP_990477.1">
    <property type="nucleotide sequence ID" value="NM_205146.2"/>
</dbReference>
<dbReference type="SMR" id="P79761"/>
<dbReference type="FunCoup" id="P79761">
    <property type="interactions" value="77"/>
</dbReference>
<dbReference type="STRING" id="9031.ENSGALP00000002016"/>
<dbReference type="GlyGen" id="P79761">
    <property type="glycosylation" value="1 site"/>
</dbReference>
<dbReference type="PaxDb" id="9031-ENSGALP00000002016"/>
<dbReference type="GeneID" id="396051"/>
<dbReference type="KEGG" id="gga:396051"/>
<dbReference type="CTD" id="1544"/>
<dbReference type="VEuPathDB" id="HostDB:geneid_396051"/>
<dbReference type="eggNOG" id="KOG0156">
    <property type="taxonomic scope" value="Eukaryota"/>
</dbReference>
<dbReference type="InParanoid" id="P79761"/>
<dbReference type="OrthoDB" id="1055148at2759"/>
<dbReference type="PhylomeDB" id="P79761"/>
<dbReference type="SABIO-RK" id="P79761"/>
<dbReference type="PRO" id="PR:P79761"/>
<dbReference type="Proteomes" id="UP000000539">
    <property type="component" value="Unassembled WGS sequence"/>
</dbReference>
<dbReference type="GO" id="GO:0005789">
    <property type="term" value="C:endoplasmic reticulum membrane"/>
    <property type="evidence" value="ECO:0007669"/>
    <property type="project" value="UniProtKB-SubCell"/>
</dbReference>
<dbReference type="GO" id="GO:0043231">
    <property type="term" value="C:intracellular membrane-bounded organelle"/>
    <property type="evidence" value="ECO:0000314"/>
    <property type="project" value="AgBase"/>
</dbReference>
<dbReference type="GO" id="GO:0008392">
    <property type="term" value="F:arachidonate epoxygenase activity"/>
    <property type="evidence" value="ECO:0000314"/>
    <property type="project" value="GO_Central"/>
</dbReference>
<dbReference type="GO" id="GO:0020037">
    <property type="term" value="F:heme binding"/>
    <property type="evidence" value="ECO:0007669"/>
    <property type="project" value="InterPro"/>
</dbReference>
<dbReference type="GO" id="GO:0005506">
    <property type="term" value="F:iron ion binding"/>
    <property type="evidence" value="ECO:0007669"/>
    <property type="project" value="InterPro"/>
</dbReference>
<dbReference type="GO" id="GO:0004497">
    <property type="term" value="F:monooxygenase activity"/>
    <property type="evidence" value="ECO:0000318"/>
    <property type="project" value="GO_Central"/>
</dbReference>
<dbReference type="GO" id="GO:0016712">
    <property type="term" value="F:oxidoreductase activity, acting on paired donors, with incorporation or reduction of molecular oxygen, reduced flavin or flavoprotein as one donor, and incorporation of one atom of oxygen"/>
    <property type="evidence" value="ECO:0007669"/>
    <property type="project" value="UniProtKB-EC"/>
</dbReference>
<dbReference type="GO" id="GO:0019825">
    <property type="term" value="F:oxygen binding"/>
    <property type="evidence" value="ECO:0000314"/>
    <property type="project" value="AgBase"/>
</dbReference>
<dbReference type="GO" id="GO:1990748">
    <property type="term" value="P:cellular detoxification"/>
    <property type="evidence" value="ECO:0000314"/>
    <property type="project" value="AgBase"/>
</dbReference>
<dbReference type="GO" id="GO:0036146">
    <property type="term" value="P:cellular response to mycotoxin"/>
    <property type="evidence" value="ECO:0000270"/>
    <property type="project" value="AgBase"/>
</dbReference>
<dbReference type="GO" id="GO:0046677">
    <property type="term" value="P:response to antibiotic"/>
    <property type="evidence" value="ECO:0000315"/>
    <property type="project" value="AgBase"/>
</dbReference>
<dbReference type="GO" id="GO:0006805">
    <property type="term" value="P:xenobiotic metabolic process"/>
    <property type="evidence" value="ECO:0000315"/>
    <property type="project" value="AgBase"/>
</dbReference>
<dbReference type="CDD" id="cd20676">
    <property type="entry name" value="CYP1A"/>
    <property type="match status" value="1"/>
</dbReference>
<dbReference type="FunFam" id="1.10.630.10:FF:000002">
    <property type="entry name" value="Cytochrome P450 1A1"/>
    <property type="match status" value="1"/>
</dbReference>
<dbReference type="Gene3D" id="1.10.630.10">
    <property type="entry name" value="Cytochrome P450"/>
    <property type="match status" value="1"/>
</dbReference>
<dbReference type="InterPro" id="IPR001128">
    <property type="entry name" value="Cyt_P450"/>
</dbReference>
<dbReference type="InterPro" id="IPR017972">
    <property type="entry name" value="Cyt_P450_CS"/>
</dbReference>
<dbReference type="InterPro" id="IPR002401">
    <property type="entry name" value="Cyt_P450_E_grp-I"/>
</dbReference>
<dbReference type="InterPro" id="IPR008066">
    <property type="entry name" value="Cyt_P450_E_grp-I_CYP1"/>
</dbReference>
<dbReference type="InterPro" id="IPR036396">
    <property type="entry name" value="Cyt_P450_sf"/>
</dbReference>
<dbReference type="PANTHER" id="PTHR24289:SF21">
    <property type="entry name" value="CYTOCHROME P450 1A"/>
    <property type="match status" value="1"/>
</dbReference>
<dbReference type="PANTHER" id="PTHR24289">
    <property type="entry name" value="STEROID 17-ALPHA-HYDROXYLASE/17,20 LYASE"/>
    <property type="match status" value="1"/>
</dbReference>
<dbReference type="Pfam" id="PF00067">
    <property type="entry name" value="p450"/>
    <property type="match status" value="1"/>
</dbReference>
<dbReference type="PRINTS" id="PR00463">
    <property type="entry name" value="EP450I"/>
</dbReference>
<dbReference type="PRINTS" id="PR01683">
    <property type="entry name" value="EP450ICYP1A"/>
</dbReference>
<dbReference type="PRINTS" id="PR00385">
    <property type="entry name" value="P450"/>
</dbReference>
<dbReference type="SUPFAM" id="SSF48264">
    <property type="entry name" value="Cytochrome P450"/>
    <property type="match status" value="1"/>
</dbReference>
<dbReference type="PROSITE" id="PS00086">
    <property type="entry name" value="CYTOCHROME_P450"/>
    <property type="match status" value="1"/>
</dbReference>
<keyword id="KW-0256">Endoplasmic reticulum</keyword>
<keyword id="KW-0349">Heme</keyword>
<keyword id="KW-0408">Iron</keyword>
<keyword id="KW-0472">Membrane</keyword>
<keyword id="KW-0479">Metal-binding</keyword>
<keyword id="KW-0492">Microsome</keyword>
<keyword id="KW-0503">Monooxygenase</keyword>
<keyword id="KW-0560">Oxidoreductase</keyword>
<keyword id="KW-1185">Reference proteome</keyword>
<proteinExistence type="evidence at transcript level"/>
<accession>P79761</accession>